<accession>Q8FDH4</accession>
<protein>
    <recommendedName>
        <fullName evidence="1">Bifunctional glutamine synthetase adenylyltransferase/adenylyl-removing enzyme</fullName>
    </recommendedName>
    <alternativeName>
        <fullName evidence="1">ATP:glutamine synthetase adenylyltransferase</fullName>
    </alternativeName>
    <alternativeName>
        <fullName evidence="1">ATase</fullName>
    </alternativeName>
    <domain>
        <recommendedName>
            <fullName evidence="1">Glutamine synthetase adenylyl-L-tyrosine phosphorylase</fullName>
            <ecNumber evidence="1">2.7.7.89</ecNumber>
        </recommendedName>
        <alternativeName>
            <fullName evidence="1">Adenylyl removase</fullName>
            <shortName evidence="1">AR</shortName>
            <shortName evidence="1">AT-N</shortName>
        </alternativeName>
    </domain>
    <domain>
        <recommendedName>
            <fullName evidence="1">Glutamine synthetase adenylyl transferase</fullName>
            <ecNumber evidence="1">2.7.7.42</ecNumber>
        </recommendedName>
        <alternativeName>
            <fullName evidence="1">Adenylyl transferase</fullName>
            <shortName evidence="1">AT</shortName>
            <shortName evidence="1">AT-C</shortName>
        </alternativeName>
    </domain>
</protein>
<feature type="chain" id="PRO_0000209246" description="Bifunctional glutamine synthetase adenylyltransferase/adenylyl-removing enzyme">
    <location>
        <begin position="1"/>
        <end position="946"/>
    </location>
</feature>
<feature type="region of interest" description="Adenylyl removase" evidence="1">
    <location>
        <begin position="1"/>
        <end position="440"/>
    </location>
</feature>
<feature type="region of interest" description="Adenylyl transferase" evidence="1">
    <location>
        <begin position="449"/>
        <end position="946"/>
    </location>
</feature>
<gene>
    <name evidence="1" type="primary">glnE</name>
    <name type="ordered locus">c3801</name>
</gene>
<name>GLNE_ECOL6</name>
<organism>
    <name type="scientific">Escherichia coli O6:H1 (strain CFT073 / ATCC 700928 / UPEC)</name>
    <dbReference type="NCBI Taxonomy" id="199310"/>
    <lineage>
        <taxon>Bacteria</taxon>
        <taxon>Pseudomonadati</taxon>
        <taxon>Pseudomonadota</taxon>
        <taxon>Gammaproteobacteria</taxon>
        <taxon>Enterobacterales</taxon>
        <taxon>Enterobacteriaceae</taxon>
        <taxon>Escherichia</taxon>
    </lineage>
</organism>
<reference key="1">
    <citation type="journal article" date="2002" name="Proc. Natl. Acad. Sci. U.S.A.">
        <title>Extensive mosaic structure revealed by the complete genome sequence of uropathogenic Escherichia coli.</title>
        <authorList>
            <person name="Welch R.A."/>
            <person name="Burland V."/>
            <person name="Plunkett G. III"/>
            <person name="Redford P."/>
            <person name="Roesch P."/>
            <person name="Rasko D."/>
            <person name="Buckles E.L."/>
            <person name="Liou S.-R."/>
            <person name="Boutin A."/>
            <person name="Hackett J."/>
            <person name="Stroud D."/>
            <person name="Mayhew G.F."/>
            <person name="Rose D.J."/>
            <person name="Zhou S."/>
            <person name="Schwartz D.C."/>
            <person name="Perna N.T."/>
            <person name="Mobley H.L.T."/>
            <person name="Donnenberg M.S."/>
            <person name="Blattner F.R."/>
        </authorList>
    </citation>
    <scope>NUCLEOTIDE SEQUENCE [LARGE SCALE GENOMIC DNA]</scope>
    <source>
        <strain>CFT073 / ATCC 700928 / UPEC</strain>
    </source>
</reference>
<comment type="function">
    <text evidence="1">Involved in the regulation of glutamine synthetase GlnA, a key enzyme in the process to assimilate ammonia. When cellular nitrogen levels are high, the C-terminal adenylyl transferase (AT) inactivates GlnA by covalent transfer of an adenylyl group from ATP to specific tyrosine residue of GlnA, thus reducing its activity. Conversely, when nitrogen levels are low, the N-terminal adenylyl removase (AR) activates GlnA by removing the adenylyl group by phosphorolysis, increasing its activity. The regulatory region of GlnE binds the signal transduction protein PII (GlnB) which indicates the nitrogen status of the cell.</text>
</comment>
<comment type="catalytic activity">
    <reaction evidence="1">
        <text>[glutamine synthetase]-O(4)-(5'-adenylyl)-L-tyrosine + phosphate = [glutamine synthetase]-L-tyrosine + ADP</text>
        <dbReference type="Rhea" id="RHEA:43716"/>
        <dbReference type="Rhea" id="RHEA-COMP:10660"/>
        <dbReference type="Rhea" id="RHEA-COMP:10661"/>
        <dbReference type="ChEBI" id="CHEBI:43474"/>
        <dbReference type="ChEBI" id="CHEBI:46858"/>
        <dbReference type="ChEBI" id="CHEBI:83624"/>
        <dbReference type="ChEBI" id="CHEBI:456216"/>
        <dbReference type="EC" id="2.7.7.89"/>
    </reaction>
</comment>
<comment type="catalytic activity">
    <reaction evidence="1">
        <text>[glutamine synthetase]-L-tyrosine + ATP = [glutamine synthetase]-O(4)-(5'-adenylyl)-L-tyrosine + diphosphate</text>
        <dbReference type="Rhea" id="RHEA:18589"/>
        <dbReference type="Rhea" id="RHEA-COMP:10660"/>
        <dbReference type="Rhea" id="RHEA-COMP:10661"/>
        <dbReference type="ChEBI" id="CHEBI:30616"/>
        <dbReference type="ChEBI" id="CHEBI:33019"/>
        <dbReference type="ChEBI" id="CHEBI:46858"/>
        <dbReference type="ChEBI" id="CHEBI:83624"/>
        <dbReference type="EC" id="2.7.7.42"/>
    </reaction>
</comment>
<comment type="cofactor">
    <cofactor evidence="1">
        <name>Mg(2+)</name>
        <dbReference type="ChEBI" id="CHEBI:18420"/>
    </cofactor>
</comment>
<comment type="similarity">
    <text evidence="1">Belongs to the GlnE family.</text>
</comment>
<comment type="sequence caution" evidence="2">
    <conflict type="erroneous initiation">
        <sequence resource="EMBL-CDS" id="AAN82246"/>
    </conflict>
</comment>
<keyword id="KW-0067">ATP-binding</keyword>
<keyword id="KW-0460">Magnesium</keyword>
<keyword id="KW-0511">Multifunctional enzyme</keyword>
<keyword id="KW-0547">Nucleotide-binding</keyword>
<keyword id="KW-0548">Nucleotidyltransferase</keyword>
<keyword id="KW-1185">Reference proteome</keyword>
<keyword id="KW-0808">Transferase</keyword>
<evidence type="ECO:0000255" key="1">
    <source>
        <dbReference type="HAMAP-Rule" id="MF_00802"/>
    </source>
</evidence>
<evidence type="ECO:0000305" key="2"/>
<dbReference type="EC" id="2.7.7.89" evidence="1"/>
<dbReference type="EC" id="2.7.7.42" evidence="1"/>
<dbReference type="EMBL" id="AE014075">
    <property type="protein sequence ID" value="AAN82246.1"/>
    <property type="status" value="ALT_INIT"/>
    <property type="molecule type" value="Genomic_DNA"/>
</dbReference>
<dbReference type="RefSeq" id="WP_011076594.1">
    <property type="nucleotide sequence ID" value="NC_004431.1"/>
</dbReference>
<dbReference type="SMR" id="Q8FDH4"/>
<dbReference type="STRING" id="199310.c3801"/>
<dbReference type="KEGG" id="ecc:c3801"/>
<dbReference type="eggNOG" id="COG1391">
    <property type="taxonomic scope" value="Bacteria"/>
</dbReference>
<dbReference type="HOGENOM" id="CLU_006233_0_1_6"/>
<dbReference type="Proteomes" id="UP000001410">
    <property type="component" value="Chromosome"/>
</dbReference>
<dbReference type="GO" id="GO:0005829">
    <property type="term" value="C:cytosol"/>
    <property type="evidence" value="ECO:0007669"/>
    <property type="project" value="TreeGrafter"/>
</dbReference>
<dbReference type="GO" id="GO:0008882">
    <property type="term" value="F:[glutamate-ammonia-ligase] adenylyltransferase activity"/>
    <property type="evidence" value="ECO:0007669"/>
    <property type="project" value="UniProtKB-UniRule"/>
</dbReference>
<dbReference type="GO" id="GO:0047388">
    <property type="term" value="F:[glutamine synthetase]-adenylyl-L-tyrosine phosphorylase activity"/>
    <property type="evidence" value="ECO:0007669"/>
    <property type="project" value="UniProtKB-EC"/>
</dbReference>
<dbReference type="GO" id="GO:0005524">
    <property type="term" value="F:ATP binding"/>
    <property type="evidence" value="ECO:0007669"/>
    <property type="project" value="UniProtKB-UniRule"/>
</dbReference>
<dbReference type="GO" id="GO:0000287">
    <property type="term" value="F:magnesium ion binding"/>
    <property type="evidence" value="ECO:0007669"/>
    <property type="project" value="UniProtKB-UniRule"/>
</dbReference>
<dbReference type="GO" id="GO:0000820">
    <property type="term" value="P:regulation of glutamine family amino acid metabolic process"/>
    <property type="evidence" value="ECO:0007669"/>
    <property type="project" value="UniProtKB-UniRule"/>
</dbReference>
<dbReference type="CDD" id="cd05401">
    <property type="entry name" value="NT_GlnE_GlnD_like"/>
    <property type="match status" value="2"/>
</dbReference>
<dbReference type="FunFam" id="1.10.4050.10:FF:000001">
    <property type="entry name" value="Bifunctional glutamine synthetase adenylyltransferase/adenylyl-removing enzyme"/>
    <property type="match status" value="1"/>
</dbReference>
<dbReference type="FunFam" id="1.20.120.1510:FF:000001">
    <property type="entry name" value="Bifunctional glutamine synthetase adenylyltransferase/adenylyl-removing enzyme"/>
    <property type="match status" value="1"/>
</dbReference>
<dbReference type="FunFam" id="1.20.120.330:FF:000005">
    <property type="entry name" value="Bifunctional glutamine synthetase adenylyltransferase/adenylyl-removing enzyme"/>
    <property type="match status" value="1"/>
</dbReference>
<dbReference type="FunFam" id="1.20.120.330:FF:000008">
    <property type="entry name" value="Bifunctional glutamine synthetase adenylyltransferase/adenylyl-removing enzyme"/>
    <property type="match status" value="1"/>
</dbReference>
<dbReference type="FunFam" id="3.30.460.10:FF:000009">
    <property type="entry name" value="Bifunctional glutamine synthetase adenylyltransferase/adenylyl-removing enzyme"/>
    <property type="match status" value="1"/>
</dbReference>
<dbReference type="FunFam" id="3.30.460.10:FF:000014">
    <property type="entry name" value="Bifunctional glutamine synthetase adenylyltransferase/adenylyl-removing enzyme"/>
    <property type="match status" value="1"/>
</dbReference>
<dbReference type="Gene3D" id="1.20.120.1510">
    <property type="match status" value="1"/>
</dbReference>
<dbReference type="Gene3D" id="3.30.460.10">
    <property type="entry name" value="Beta Polymerase, domain 2"/>
    <property type="match status" value="2"/>
</dbReference>
<dbReference type="Gene3D" id="1.10.4050.10">
    <property type="entry name" value="Glutamine synthase adenylyltransferase GlnE"/>
    <property type="match status" value="1"/>
</dbReference>
<dbReference type="Gene3D" id="1.20.120.330">
    <property type="entry name" value="Nucleotidyltransferases domain 2"/>
    <property type="match status" value="2"/>
</dbReference>
<dbReference type="HAMAP" id="MF_00802">
    <property type="entry name" value="GlnE"/>
    <property type="match status" value="1"/>
</dbReference>
<dbReference type="InterPro" id="IPR023057">
    <property type="entry name" value="GlnE"/>
</dbReference>
<dbReference type="InterPro" id="IPR005190">
    <property type="entry name" value="GlnE_rpt_dom"/>
</dbReference>
<dbReference type="InterPro" id="IPR043519">
    <property type="entry name" value="NT_sf"/>
</dbReference>
<dbReference type="InterPro" id="IPR013546">
    <property type="entry name" value="PII_UdlTrfase/GS_AdlTrfase"/>
</dbReference>
<dbReference type="NCBIfam" id="NF008292">
    <property type="entry name" value="PRK11072.1"/>
    <property type="match status" value="1"/>
</dbReference>
<dbReference type="PANTHER" id="PTHR30621:SF0">
    <property type="entry name" value="BIFUNCTIONAL GLUTAMINE SYNTHETASE ADENYLYLTRANSFERASE_ADENYLYL-REMOVING ENZYME"/>
    <property type="match status" value="1"/>
</dbReference>
<dbReference type="PANTHER" id="PTHR30621">
    <property type="entry name" value="GLUTAMINE SYNTHETASE ADENYLYLTRANSFERASE"/>
    <property type="match status" value="1"/>
</dbReference>
<dbReference type="Pfam" id="PF08335">
    <property type="entry name" value="GlnD_UR_UTase"/>
    <property type="match status" value="2"/>
</dbReference>
<dbReference type="Pfam" id="PF03710">
    <property type="entry name" value="GlnE"/>
    <property type="match status" value="2"/>
</dbReference>
<dbReference type="SUPFAM" id="SSF81301">
    <property type="entry name" value="Nucleotidyltransferase"/>
    <property type="match status" value="2"/>
</dbReference>
<dbReference type="SUPFAM" id="SSF81593">
    <property type="entry name" value="Nucleotidyltransferase substrate binding subunit/domain"/>
    <property type="match status" value="2"/>
</dbReference>
<proteinExistence type="inferred from homology"/>
<sequence length="946" mass="108392">MKPLSSPLQQYWQTVVERLPEPLAEESLSAQAKSVLTFSDFVQDSVIAHPEWLTELESQPPQADEWQHYASWLQEALSNVSDEAGLMRELRLFRRRIMVRIAWAQTLALVTEESILQQLSHLAETLIVAARDWLYDACCREWGTPCNAQGEAQPLLILGMGKLGGGELNFSSDIDLIFAWPEHGCTQGGRRELDNAQFFTRMGQRLIKVLDQPTQDGFVYRVDMRLRPFGESGPLVLSFAALEDYYQEQGRDWERYAMVKARIMGDSDGVYANELRAMLRPFVFRRYIDFSVIQSLRNMKGMIAREVRRRGLTDNIKLGAGGIREIEFIVQVFQLIRGGREPSLQSRALLPTLSAIAALHLLSENDAEQLRVAYLFLRRLENLLQSINDEQTQTLPFDELNRARLAWAMDFADWPQLTGVLTAHMANVRRVFNELIGDDESETQEESLSEQWRELWQDALQEDDTTPVLAHLSEDDRKQVLMLIADFRKELDKRTIGPRGRQVLDHLMPHLLSDVCAREDAAVTLSRITALLVGIVTRTTYLELLSEFPAALKHLISLCAASPMIASQLARYPLLLDELLDPNTLYQPTATDAYRDELRQYLLRVPEDDEEQQLEALRQFKQAQLLRIAAADIAGTLPVMKVSDHLTWLAEAMIDAVVQQAWVQMVARYGKPNHLNEREGRGFAVVGYGKLGGWELGYSSDLDLIFLHDCPMDAMTDGEREIDGRQFYLRLAQRIMHLFSTRTSSGILYEVDARLRPSGAAGMLVTSAEAFADYQKNEAWTWEHQALVRARVVYGDPQLTAHFDAVRREIMTLPREGKTLQTEVREMREKMRAHLGNKHRDRFDIKADEGGITDIEFITQYLVLRYAHEKPKLTRWSDNVRILELLAQNDIMEEQEAMALTRAYTTLRDELHHLALQELPGHVSEDCFTAERELVRASWQKWLVEE</sequence>